<comment type="function">
    <text evidence="1">One of the primary rRNA binding proteins, it binds directly to 16S rRNA where it nucleates assembly of the head domain of the 30S subunit. Is located at the subunit interface close to the decoding center, probably blocks exit of the E-site tRNA.</text>
</comment>
<comment type="subunit">
    <text evidence="1">Part of the 30S ribosomal subunit. Contacts proteins S9 and S11.</text>
</comment>
<comment type="similarity">
    <text evidence="1">Belongs to the universal ribosomal protein uS7 family.</text>
</comment>
<keyword id="KW-0687">Ribonucleoprotein</keyword>
<keyword id="KW-0689">Ribosomal protein</keyword>
<keyword id="KW-0694">RNA-binding</keyword>
<keyword id="KW-0699">rRNA-binding</keyword>
<keyword id="KW-0820">tRNA-binding</keyword>
<feature type="chain" id="PRO_1000206409" description="Small ribosomal subunit protein uS7">
    <location>
        <begin position="1"/>
        <end position="156"/>
    </location>
</feature>
<reference key="1">
    <citation type="journal article" date="2012" name="BMC Genomics">
        <title>Comparative genomics and transcriptomics of lineages I, II, and III strains of Listeria monocytogenes.</title>
        <authorList>
            <person name="Hain T."/>
            <person name="Ghai R."/>
            <person name="Billion A."/>
            <person name="Kuenne C.T."/>
            <person name="Steinweg C."/>
            <person name="Izar B."/>
            <person name="Mohamed W."/>
            <person name="Mraheil M."/>
            <person name="Domann E."/>
            <person name="Schaffrath S."/>
            <person name="Karst U."/>
            <person name="Goesmann A."/>
            <person name="Oehm S."/>
            <person name="Puhler A."/>
            <person name="Merkl R."/>
            <person name="Vorwerk S."/>
            <person name="Glaser P."/>
            <person name="Garrido P."/>
            <person name="Rusniok C."/>
            <person name="Buchrieser C."/>
            <person name="Goebel W."/>
            <person name="Chakraborty T."/>
        </authorList>
    </citation>
    <scope>NUCLEOTIDE SEQUENCE [LARGE SCALE GENOMIC DNA]</scope>
    <source>
        <strain>CLIP80459</strain>
    </source>
</reference>
<protein>
    <recommendedName>
        <fullName evidence="1">Small ribosomal subunit protein uS7</fullName>
    </recommendedName>
    <alternativeName>
        <fullName evidence="2">30S ribosomal protein S7</fullName>
    </alternativeName>
</protein>
<gene>
    <name evidence="1" type="primary">rpsG</name>
    <name type="ordered locus">Lm4b_02627</name>
</gene>
<organism>
    <name type="scientific">Listeria monocytogenes serotype 4b (strain CLIP80459)</name>
    <dbReference type="NCBI Taxonomy" id="568819"/>
    <lineage>
        <taxon>Bacteria</taxon>
        <taxon>Bacillati</taxon>
        <taxon>Bacillota</taxon>
        <taxon>Bacilli</taxon>
        <taxon>Bacillales</taxon>
        <taxon>Listeriaceae</taxon>
        <taxon>Listeria</taxon>
    </lineage>
</organism>
<name>RS7_LISMC</name>
<accession>C1KZK8</accession>
<proteinExistence type="inferred from homology"/>
<dbReference type="EMBL" id="FM242711">
    <property type="protein sequence ID" value="CAS06381.1"/>
    <property type="molecule type" value="Genomic_DNA"/>
</dbReference>
<dbReference type="RefSeq" id="WP_003722012.1">
    <property type="nucleotide sequence ID" value="NC_012488.1"/>
</dbReference>
<dbReference type="SMR" id="C1KZK8"/>
<dbReference type="GeneID" id="93236077"/>
<dbReference type="KEGG" id="lmc:Lm4b_02627"/>
<dbReference type="HOGENOM" id="CLU_072226_1_1_9"/>
<dbReference type="GO" id="GO:0015935">
    <property type="term" value="C:small ribosomal subunit"/>
    <property type="evidence" value="ECO:0007669"/>
    <property type="project" value="InterPro"/>
</dbReference>
<dbReference type="GO" id="GO:0019843">
    <property type="term" value="F:rRNA binding"/>
    <property type="evidence" value="ECO:0007669"/>
    <property type="project" value="UniProtKB-UniRule"/>
</dbReference>
<dbReference type="GO" id="GO:0003735">
    <property type="term" value="F:structural constituent of ribosome"/>
    <property type="evidence" value="ECO:0007669"/>
    <property type="project" value="InterPro"/>
</dbReference>
<dbReference type="GO" id="GO:0000049">
    <property type="term" value="F:tRNA binding"/>
    <property type="evidence" value="ECO:0007669"/>
    <property type="project" value="UniProtKB-UniRule"/>
</dbReference>
<dbReference type="GO" id="GO:0006412">
    <property type="term" value="P:translation"/>
    <property type="evidence" value="ECO:0007669"/>
    <property type="project" value="UniProtKB-UniRule"/>
</dbReference>
<dbReference type="CDD" id="cd14869">
    <property type="entry name" value="uS7_Bacteria"/>
    <property type="match status" value="1"/>
</dbReference>
<dbReference type="FunFam" id="1.10.455.10:FF:000001">
    <property type="entry name" value="30S ribosomal protein S7"/>
    <property type="match status" value="1"/>
</dbReference>
<dbReference type="Gene3D" id="1.10.455.10">
    <property type="entry name" value="Ribosomal protein S7 domain"/>
    <property type="match status" value="1"/>
</dbReference>
<dbReference type="HAMAP" id="MF_00480_B">
    <property type="entry name" value="Ribosomal_uS7_B"/>
    <property type="match status" value="1"/>
</dbReference>
<dbReference type="InterPro" id="IPR000235">
    <property type="entry name" value="Ribosomal_uS7"/>
</dbReference>
<dbReference type="InterPro" id="IPR005717">
    <property type="entry name" value="Ribosomal_uS7_bac/org-type"/>
</dbReference>
<dbReference type="InterPro" id="IPR020606">
    <property type="entry name" value="Ribosomal_uS7_CS"/>
</dbReference>
<dbReference type="InterPro" id="IPR023798">
    <property type="entry name" value="Ribosomal_uS7_dom"/>
</dbReference>
<dbReference type="InterPro" id="IPR036823">
    <property type="entry name" value="Ribosomal_uS7_dom_sf"/>
</dbReference>
<dbReference type="NCBIfam" id="TIGR01029">
    <property type="entry name" value="rpsG_bact"/>
    <property type="match status" value="1"/>
</dbReference>
<dbReference type="PANTHER" id="PTHR11205">
    <property type="entry name" value="RIBOSOMAL PROTEIN S7"/>
    <property type="match status" value="1"/>
</dbReference>
<dbReference type="Pfam" id="PF00177">
    <property type="entry name" value="Ribosomal_S7"/>
    <property type="match status" value="1"/>
</dbReference>
<dbReference type="PIRSF" id="PIRSF002122">
    <property type="entry name" value="RPS7p_RPS7a_RPS5e_RPS7o"/>
    <property type="match status" value="1"/>
</dbReference>
<dbReference type="SUPFAM" id="SSF47973">
    <property type="entry name" value="Ribosomal protein S7"/>
    <property type="match status" value="1"/>
</dbReference>
<dbReference type="PROSITE" id="PS00052">
    <property type="entry name" value="RIBOSOMAL_S7"/>
    <property type="match status" value="1"/>
</dbReference>
<sequence>MPRKGPVAKRDVLPDPIYNSKLVTRLINKMMVDGKRGKSQAILYSAFDIIAQETGKDPMEVFEQAMKNIMPLLEVKARRVGGANYQVPIEVRADRRSTLGLRWLVNYARLRGEKTMEVRVAREIMDAANNTGASVKKREDTHKMADANRAFAHYRW</sequence>
<evidence type="ECO:0000255" key="1">
    <source>
        <dbReference type="HAMAP-Rule" id="MF_00480"/>
    </source>
</evidence>
<evidence type="ECO:0000305" key="2"/>